<organism>
    <name type="scientific">Acidiphilium cryptum (strain JF-5)</name>
    <dbReference type="NCBI Taxonomy" id="349163"/>
    <lineage>
        <taxon>Bacteria</taxon>
        <taxon>Pseudomonadati</taxon>
        <taxon>Pseudomonadota</taxon>
        <taxon>Alphaproteobacteria</taxon>
        <taxon>Acetobacterales</taxon>
        <taxon>Acidocellaceae</taxon>
        <taxon>Acidiphilium</taxon>
    </lineage>
</organism>
<evidence type="ECO:0000255" key="1">
    <source>
        <dbReference type="HAMAP-Rule" id="MF_00420"/>
    </source>
</evidence>
<keyword id="KW-0067">ATP-binding</keyword>
<keyword id="KW-0963">Cytoplasm</keyword>
<keyword id="KW-0436">Ligase</keyword>
<keyword id="KW-0460">Magnesium</keyword>
<keyword id="KW-0479">Metal-binding</keyword>
<keyword id="KW-0547">Nucleotide-binding</keyword>
<keyword id="KW-0658">Purine biosynthesis</keyword>
<keyword id="KW-1185">Reference proteome</keyword>
<accession>A5G1X4</accession>
<feature type="chain" id="PRO_1000050294" description="Phosphoribosylformylglycinamidine synthase subunit PurL">
    <location>
        <begin position="1"/>
        <end position="727"/>
    </location>
</feature>
<feature type="active site" evidence="1">
    <location>
        <position position="47"/>
    </location>
</feature>
<feature type="active site" description="Proton acceptor" evidence="1">
    <location>
        <position position="93"/>
    </location>
</feature>
<feature type="binding site" evidence="1">
    <location>
        <position position="50"/>
    </location>
    <ligand>
        <name>ATP</name>
        <dbReference type="ChEBI" id="CHEBI:30616"/>
    </ligand>
</feature>
<feature type="binding site" evidence="1">
    <location>
        <position position="89"/>
    </location>
    <ligand>
        <name>ATP</name>
        <dbReference type="ChEBI" id="CHEBI:30616"/>
    </ligand>
</feature>
<feature type="binding site" evidence="1">
    <location>
        <position position="91"/>
    </location>
    <ligand>
        <name>Mg(2+)</name>
        <dbReference type="ChEBI" id="CHEBI:18420"/>
        <label>1</label>
    </ligand>
</feature>
<feature type="binding site" evidence="1">
    <location>
        <begin position="92"/>
        <end position="95"/>
    </location>
    <ligand>
        <name>substrate</name>
    </ligand>
</feature>
<feature type="binding site" evidence="1">
    <location>
        <position position="114"/>
    </location>
    <ligand>
        <name>substrate</name>
    </ligand>
</feature>
<feature type="binding site" evidence="1">
    <location>
        <position position="115"/>
    </location>
    <ligand>
        <name>Mg(2+)</name>
        <dbReference type="ChEBI" id="CHEBI:18420"/>
        <label>2</label>
    </ligand>
</feature>
<feature type="binding site" evidence="1">
    <location>
        <position position="238"/>
    </location>
    <ligand>
        <name>substrate</name>
    </ligand>
</feature>
<feature type="binding site" evidence="1">
    <location>
        <position position="266"/>
    </location>
    <ligand>
        <name>Mg(2+)</name>
        <dbReference type="ChEBI" id="CHEBI:18420"/>
        <label>2</label>
    </ligand>
</feature>
<feature type="binding site" evidence="1">
    <location>
        <begin position="310"/>
        <end position="312"/>
    </location>
    <ligand>
        <name>substrate</name>
    </ligand>
</feature>
<feature type="binding site" evidence="1">
    <location>
        <position position="490"/>
    </location>
    <ligand>
        <name>ATP</name>
        <dbReference type="ChEBI" id="CHEBI:30616"/>
    </ligand>
</feature>
<feature type="binding site" evidence="1">
    <location>
        <position position="527"/>
    </location>
    <ligand>
        <name>ATP</name>
        <dbReference type="ChEBI" id="CHEBI:30616"/>
    </ligand>
</feature>
<feature type="binding site" evidence="1">
    <location>
        <position position="528"/>
    </location>
    <ligand>
        <name>Mg(2+)</name>
        <dbReference type="ChEBI" id="CHEBI:18420"/>
        <label>1</label>
    </ligand>
</feature>
<feature type="binding site" evidence="1">
    <location>
        <position position="530"/>
    </location>
    <ligand>
        <name>substrate</name>
    </ligand>
</feature>
<protein>
    <recommendedName>
        <fullName evidence="1">Phosphoribosylformylglycinamidine synthase subunit PurL</fullName>
        <shortName evidence="1">FGAM synthase</shortName>
        <ecNumber evidence="1">6.3.5.3</ecNumber>
    </recommendedName>
    <alternativeName>
        <fullName evidence="1">Formylglycinamide ribonucleotide amidotransferase subunit II</fullName>
        <shortName evidence="1">FGAR amidotransferase II</shortName>
        <shortName evidence="1">FGAR-AT II</shortName>
    </alternativeName>
    <alternativeName>
        <fullName evidence="1">Glutamine amidotransferase PurL</fullName>
    </alternativeName>
    <alternativeName>
        <fullName evidence="1">Phosphoribosylformylglycinamidine synthase subunit II</fullName>
    </alternativeName>
</protein>
<proteinExistence type="inferred from homology"/>
<reference key="1">
    <citation type="submission" date="2007-05" db="EMBL/GenBank/DDBJ databases">
        <title>Complete sequence of chromosome of Acidiphilium cryptum JF-5.</title>
        <authorList>
            <consortium name="US DOE Joint Genome Institute"/>
            <person name="Copeland A."/>
            <person name="Lucas S."/>
            <person name="Lapidus A."/>
            <person name="Barry K."/>
            <person name="Detter J.C."/>
            <person name="Glavina del Rio T."/>
            <person name="Hammon N."/>
            <person name="Israni S."/>
            <person name="Dalin E."/>
            <person name="Tice H."/>
            <person name="Pitluck S."/>
            <person name="Sims D."/>
            <person name="Brettin T."/>
            <person name="Bruce D."/>
            <person name="Han C."/>
            <person name="Schmutz J."/>
            <person name="Larimer F."/>
            <person name="Land M."/>
            <person name="Hauser L."/>
            <person name="Kyrpides N."/>
            <person name="Kim E."/>
            <person name="Magnuson T."/>
            <person name="Richardson P."/>
        </authorList>
    </citation>
    <scope>NUCLEOTIDE SEQUENCE [LARGE SCALE GENOMIC DNA]</scope>
    <source>
        <strain>JF-5</strain>
    </source>
</reference>
<sequence>MNPTVIDAALARSFGLAAEEYDRVLAIMGRVPTLTELGIFSVMWSEHCSYKSSRIWLKTLPTTAPWVIHGPGENAGVVDIGEGRAAIFKMESHNHPSFIEPYQGAATGVGGILRDVFTMGARPVANLNALRFGDPSLPVTKRVVDGVVRGIGGYGNCVGVPTVGGETNFHPSYNGNPLVNAMTVGIADQDRIFLSAAAGIGNPVVYVGSKTGRDGIHGATMASAEFGADAEEKRPTVQVGDPFIEKLLIEACLELMATDAIVAIQDMGAAGLTSSSVEMAGKGGVGIELDLDSVPQREAGMSAYEMMLSESQERMLIVLKPGREDMARAIFEKWELDFAVIGRITDSGRIVVKHQGRTEADIELAPLADQAPLYERPWVEPAKPAPLGPVESPLPPGAALLALIGCPDLASRAWIWNQYDGTVGGQTLRRPGQADAAIVRIEGSRRALALTTDCTPRYCVADPETGGAQAVVESWRNITATGATPLAVTDNLNFGNPEKPAIMGQIVAAIRGMGEACRALDYPIVSGNVSLYNETEGTAILPTPAIGGLGVIDDGAAATGIALAPGLDLVLIGETSGELGASLFLREILRREDGAPPALDLAAEKRNGDFVRRQIHAGAIAACHDVSDGGLLVALAEMALAGNTGIALAAIPEGIAPHAFWFGEDQARYVAATADGAALIAEAAAAGIPARPLGRSGGDHLTGPDGIAISLSEIRAAHEAFFARWFA</sequence>
<name>PURL_ACICJ</name>
<gene>
    <name evidence="1" type="primary">purL</name>
    <name type="ordered locus">Acry_2665</name>
</gene>
<comment type="function">
    <text evidence="1">Part of the phosphoribosylformylglycinamidine synthase complex involved in the purines biosynthetic pathway. Catalyzes the ATP-dependent conversion of formylglycinamide ribonucleotide (FGAR) and glutamine to yield formylglycinamidine ribonucleotide (FGAM) and glutamate. The FGAM synthase complex is composed of three subunits. PurQ produces an ammonia molecule by converting glutamine to glutamate. PurL transfers the ammonia molecule to FGAR to form FGAM in an ATP-dependent manner. PurS interacts with PurQ and PurL and is thought to assist in the transfer of the ammonia molecule from PurQ to PurL.</text>
</comment>
<comment type="catalytic activity">
    <reaction evidence="1">
        <text>N(2)-formyl-N(1)-(5-phospho-beta-D-ribosyl)glycinamide + L-glutamine + ATP + H2O = 2-formamido-N(1)-(5-O-phospho-beta-D-ribosyl)acetamidine + L-glutamate + ADP + phosphate + H(+)</text>
        <dbReference type="Rhea" id="RHEA:17129"/>
        <dbReference type="ChEBI" id="CHEBI:15377"/>
        <dbReference type="ChEBI" id="CHEBI:15378"/>
        <dbReference type="ChEBI" id="CHEBI:29985"/>
        <dbReference type="ChEBI" id="CHEBI:30616"/>
        <dbReference type="ChEBI" id="CHEBI:43474"/>
        <dbReference type="ChEBI" id="CHEBI:58359"/>
        <dbReference type="ChEBI" id="CHEBI:147286"/>
        <dbReference type="ChEBI" id="CHEBI:147287"/>
        <dbReference type="ChEBI" id="CHEBI:456216"/>
        <dbReference type="EC" id="6.3.5.3"/>
    </reaction>
</comment>
<comment type="pathway">
    <text evidence="1">Purine metabolism; IMP biosynthesis via de novo pathway; 5-amino-1-(5-phospho-D-ribosyl)imidazole from N(2)-formyl-N(1)-(5-phospho-D-ribosyl)glycinamide: step 1/2.</text>
</comment>
<comment type="subunit">
    <text evidence="1">Monomer. Part of the FGAM synthase complex composed of 1 PurL, 1 PurQ and 2 PurS subunits.</text>
</comment>
<comment type="subcellular location">
    <subcellularLocation>
        <location evidence="1">Cytoplasm</location>
    </subcellularLocation>
</comment>
<comment type="similarity">
    <text evidence="1">Belongs to the FGAMS family.</text>
</comment>
<dbReference type="EC" id="6.3.5.3" evidence="1"/>
<dbReference type="EMBL" id="CP000697">
    <property type="protein sequence ID" value="ABQ31856.1"/>
    <property type="molecule type" value="Genomic_DNA"/>
</dbReference>
<dbReference type="RefSeq" id="WP_012040219.1">
    <property type="nucleotide sequence ID" value="NC_009484.1"/>
</dbReference>
<dbReference type="SMR" id="A5G1X4"/>
<dbReference type="STRING" id="349163.Acry_2665"/>
<dbReference type="KEGG" id="acr:Acry_2665"/>
<dbReference type="eggNOG" id="COG0046">
    <property type="taxonomic scope" value="Bacteria"/>
</dbReference>
<dbReference type="HOGENOM" id="CLU_003100_0_1_5"/>
<dbReference type="UniPathway" id="UPA00074">
    <property type="reaction ID" value="UER00128"/>
</dbReference>
<dbReference type="Proteomes" id="UP000000245">
    <property type="component" value="Chromosome"/>
</dbReference>
<dbReference type="GO" id="GO:0005737">
    <property type="term" value="C:cytoplasm"/>
    <property type="evidence" value="ECO:0007669"/>
    <property type="project" value="UniProtKB-SubCell"/>
</dbReference>
<dbReference type="GO" id="GO:0005524">
    <property type="term" value="F:ATP binding"/>
    <property type="evidence" value="ECO:0007669"/>
    <property type="project" value="UniProtKB-UniRule"/>
</dbReference>
<dbReference type="GO" id="GO:0000287">
    <property type="term" value="F:magnesium ion binding"/>
    <property type="evidence" value="ECO:0007669"/>
    <property type="project" value="UniProtKB-UniRule"/>
</dbReference>
<dbReference type="GO" id="GO:0004642">
    <property type="term" value="F:phosphoribosylformylglycinamidine synthase activity"/>
    <property type="evidence" value="ECO:0007669"/>
    <property type="project" value="UniProtKB-UniRule"/>
</dbReference>
<dbReference type="GO" id="GO:0006189">
    <property type="term" value="P:'de novo' IMP biosynthetic process"/>
    <property type="evidence" value="ECO:0007669"/>
    <property type="project" value="UniProtKB-UniRule"/>
</dbReference>
<dbReference type="CDD" id="cd02203">
    <property type="entry name" value="PurL_repeat1"/>
    <property type="match status" value="1"/>
</dbReference>
<dbReference type="CDD" id="cd02204">
    <property type="entry name" value="PurL_repeat2"/>
    <property type="match status" value="1"/>
</dbReference>
<dbReference type="FunFam" id="3.30.1330.10:FF:000004">
    <property type="entry name" value="Phosphoribosylformylglycinamidine synthase subunit PurL"/>
    <property type="match status" value="1"/>
</dbReference>
<dbReference type="Gene3D" id="3.90.650.10">
    <property type="entry name" value="PurM-like C-terminal domain"/>
    <property type="match status" value="2"/>
</dbReference>
<dbReference type="Gene3D" id="3.30.1330.10">
    <property type="entry name" value="PurM-like, N-terminal domain"/>
    <property type="match status" value="2"/>
</dbReference>
<dbReference type="HAMAP" id="MF_00420">
    <property type="entry name" value="PurL_2"/>
    <property type="match status" value="1"/>
</dbReference>
<dbReference type="InterPro" id="IPR010074">
    <property type="entry name" value="PRibForGlyAmidine_synth_PurL"/>
</dbReference>
<dbReference type="InterPro" id="IPR041609">
    <property type="entry name" value="PurL_linker"/>
</dbReference>
<dbReference type="InterPro" id="IPR010918">
    <property type="entry name" value="PurM-like_C_dom"/>
</dbReference>
<dbReference type="InterPro" id="IPR036676">
    <property type="entry name" value="PurM-like_C_sf"/>
</dbReference>
<dbReference type="InterPro" id="IPR016188">
    <property type="entry name" value="PurM-like_N"/>
</dbReference>
<dbReference type="InterPro" id="IPR036921">
    <property type="entry name" value="PurM-like_N_sf"/>
</dbReference>
<dbReference type="NCBIfam" id="TIGR01736">
    <property type="entry name" value="FGAM_synth_II"/>
    <property type="match status" value="1"/>
</dbReference>
<dbReference type="NCBIfam" id="NF002290">
    <property type="entry name" value="PRK01213.1"/>
    <property type="match status" value="1"/>
</dbReference>
<dbReference type="PANTHER" id="PTHR43555">
    <property type="entry name" value="PHOSPHORIBOSYLFORMYLGLYCINAMIDINE SYNTHASE SUBUNIT PURL"/>
    <property type="match status" value="1"/>
</dbReference>
<dbReference type="PANTHER" id="PTHR43555:SF1">
    <property type="entry name" value="PHOSPHORIBOSYLFORMYLGLYCINAMIDINE SYNTHASE SUBUNIT PURL"/>
    <property type="match status" value="1"/>
</dbReference>
<dbReference type="Pfam" id="PF00586">
    <property type="entry name" value="AIRS"/>
    <property type="match status" value="2"/>
</dbReference>
<dbReference type="Pfam" id="PF02769">
    <property type="entry name" value="AIRS_C"/>
    <property type="match status" value="2"/>
</dbReference>
<dbReference type="Pfam" id="PF18072">
    <property type="entry name" value="FGAR-AT_linker"/>
    <property type="match status" value="1"/>
</dbReference>
<dbReference type="PIRSF" id="PIRSF001587">
    <property type="entry name" value="FGAM_synthase_II"/>
    <property type="match status" value="1"/>
</dbReference>
<dbReference type="SUPFAM" id="SSF56042">
    <property type="entry name" value="PurM C-terminal domain-like"/>
    <property type="match status" value="2"/>
</dbReference>
<dbReference type="SUPFAM" id="SSF55326">
    <property type="entry name" value="PurM N-terminal domain-like"/>
    <property type="match status" value="2"/>
</dbReference>